<dbReference type="EC" id="4.1.1.39" evidence="1"/>
<dbReference type="EMBL" id="L11674">
    <property type="protein sequence ID" value="AAA84720.1"/>
    <property type="molecule type" value="Genomic_DNA"/>
</dbReference>
<dbReference type="GO" id="GO:0009507">
    <property type="term" value="C:chloroplast"/>
    <property type="evidence" value="ECO:0007669"/>
    <property type="project" value="UniProtKB-SubCell"/>
</dbReference>
<dbReference type="GO" id="GO:0000287">
    <property type="term" value="F:magnesium ion binding"/>
    <property type="evidence" value="ECO:0007669"/>
    <property type="project" value="InterPro"/>
</dbReference>
<dbReference type="GO" id="GO:0004497">
    <property type="term" value="F:monooxygenase activity"/>
    <property type="evidence" value="ECO:0007669"/>
    <property type="project" value="UniProtKB-KW"/>
</dbReference>
<dbReference type="GO" id="GO:0016984">
    <property type="term" value="F:ribulose-bisphosphate carboxylase activity"/>
    <property type="evidence" value="ECO:0007669"/>
    <property type="project" value="UniProtKB-EC"/>
</dbReference>
<dbReference type="GO" id="GO:0009853">
    <property type="term" value="P:photorespiration"/>
    <property type="evidence" value="ECO:0007669"/>
    <property type="project" value="UniProtKB-KW"/>
</dbReference>
<dbReference type="GO" id="GO:0019253">
    <property type="term" value="P:reductive pentose-phosphate cycle"/>
    <property type="evidence" value="ECO:0007669"/>
    <property type="project" value="UniProtKB-KW"/>
</dbReference>
<dbReference type="CDD" id="cd08212">
    <property type="entry name" value="RuBisCO_large_I"/>
    <property type="match status" value="1"/>
</dbReference>
<dbReference type="FunFam" id="3.20.20.110:FF:000001">
    <property type="entry name" value="Ribulose bisphosphate carboxylase large chain"/>
    <property type="match status" value="1"/>
</dbReference>
<dbReference type="Gene3D" id="3.20.20.110">
    <property type="entry name" value="Ribulose bisphosphate carboxylase, large subunit, C-terminal domain"/>
    <property type="match status" value="1"/>
</dbReference>
<dbReference type="Gene3D" id="3.30.70.150">
    <property type="entry name" value="RuBisCO large subunit, N-terminal domain"/>
    <property type="match status" value="1"/>
</dbReference>
<dbReference type="HAMAP" id="MF_01338">
    <property type="entry name" value="RuBisCO_L_type1"/>
    <property type="match status" value="1"/>
</dbReference>
<dbReference type="InterPro" id="IPR033966">
    <property type="entry name" value="RuBisCO"/>
</dbReference>
<dbReference type="InterPro" id="IPR020878">
    <property type="entry name" value="RuBisCo_large_chain_AS"/>
</dbReference>
<dbReference type="InterPro" id="IPR000685">
    <property type="entry name" value="RuBisCO_lsu_C"/>
</dbReference>
<dbReference type="InterPro" id="IPR036376">
    <property type="entry name" value="RuBisCO_lsu_C_sf"/>
</dbReference>
<dbReference type="InterPro" id="IPR017443">
    <property type="entry name" value="RuBisCO_lsu_fd_N"/>
</dbReference>
<dbReference type="InterPro" id="IPR036422">
    <property type="entry name" value="RuBisCO_lsu_N_sf"/>
</dbReference>
<dbReference type="InterPro" id="IPR020888">
    <property type="entry name" value="RuBisCO_lsuI"/>
</dbReference>
<dbReference type="NCBIfam" id="NF003252">
    <property type="entry name" value="PRK04208.1"/>
    <property type="match status" value="1"/>
</dbReference>
<dbReference type="PANTHER" id="PTHR42704">
    <property type="entry name" value="RIBULOSE BISPHOSPHATE CARBOXYLASE"/>
    <property type="match status" value="1"/>
</dbReference>
<dbReference type="PANTHER" id="PTHR42704:SF16">
    <property type="entry name" value="RIBULOSE BISPHOSPHATE CARBOXYLASE LARGE CHAIN"/>
    <property type="match status" value="1"/>
</dbReference>
<dbReference type="Pfam" id="PF00016">
    <property type="entry name" value="RuBisCO_large"/>
    <property type="match status" value="1"/>
</dbReference>
<dbReference type="Pfam" id="PF02788">
    <property type="entry name" value="RuBisCO_large_N"/>
    <property type="match status" value="1"/>
</dbReference>
<dbReference type="SFLD" id="SFLDG01052">
    <property type="entry name" value="RuBisCO"/>
    <property type="match status" value="1"/>
</dbReference>
<dbReference type="SFLD" id="SFLDS00014">
    <property type="entry name" value="RuBisCO"/>
    <property type="match status" value="1"/>
</dbReference>
<dbReference type="SFLD" id="SFLDG00301">
    <property type="entry name" value="RuBisCO-like_proteins"/>
    <property type="match status" value="1"/>
</dbReference>
<dbReference type="SUPFAM" id="SSF51649">
    <property type="entry name" value="RuBisCo, C-terminal domain"/>
    <property type="match status" value="1"/>
</dbReference>
<dbReference type="SUPFAM" id="SSF54966">
    <property type="entry name" value="RuBisCO, large subunit, small (N-terminal) domain"/>
    <property type="match status" value="1"/>
</dbReference>
<dbReference type="PROSITE" id="PS00157">
    <property type="entry name" value="RUBISCO_LARGE"/>
    <property type="match status" value="1"/>
</dbReference>
<comment type="function">
    <text evidence="1">RuBisCO catalyzes two reactions: the carboxylation of D-ribulose 1,5-bisphosphate, the primary event in carbon dioxide fixation, as well as the oxidative fragmentation of the pentose substrate in the photorespiration process. Both reactions occur simultaneously and in competition at the same active site.</text>
</comment>
<comment type="catalytic activity">
    <reaction evidence="1">
        <text>2 (2R)-3-phosphoglycerate + 2 H(+) = D-ribulose 1,5-bisphosphate + CO2 + H2O</text>
        <dbReference type="Rhea" id="RHEA:23124"/>
        <dbReference type="ChEBI" id="CHEBI:15377"/>
        <dbReference type="ChEBI" id="CHEBI:15378"/>
        <dbReference type="ChEBI" id="CHEBI:16526"/>
        <dbReference type="ChEBI" id="CHEBI:57870"/>
        <dbReference type="ChEBI" id="CHEBI:58272"/>
        <dbReference type="EC" id="4.1.1.39"/>
    </reaction>
</comment>
<comment type="catalytic activity">
    <reaction evidence="1">
        <text>D-ribulose 1,5-bisphosphate + O2 = 2-phosphoglycolate + (2R)-3-phosphoglycerate + 2 H(+)</text>
        <dbReference type="Rhea" id="RHEA:36631"/>
        <dbReference type="ChEBI" id="CHEBI:15378"/>
        <dbReference type="ChEBI" id="CHEBI:15379"/>
        <dbReference type="ChEBI" id="CHEBI:57870"/>
        <dbReference type="ChEBI" id="CHEBI:58033"/>
        <dbReference type="ChEBI" id="CHEBI:58272"/>
    </reaction>
</comment>
<comment type="cofactor">
    <cofactor evidence="1">
        <name>Mg(2+)</name>
        <dbReference type="ChEBI" id="CHEBI:18420"/>
    </cofactor>
    <text evidence="1">Binds 1 Mg(2+) ion per subunit.</text>
</comment>
<comment type="subunit">
    <text evidence="1">Heterohexadecamer of 8 large chains and 8 small chains; disulfide-linked. The disulfide link is formed within the large subunit homodimers.</text>
</comment>
<comment type="subcellular location">
    <subcellularLocation>
        <location>Plastid</location>
        <location>Chloroplast</location>
    </subcellularLocation>
</comment>
<comment type="PTM">
    <text evidence="1">The disulfide bond which can form in the large chain dimeric partners within the hexadecamer appears to be associated with oxidative stress and protein turnover.</text>
</comment>
<comment type="miscellaneous">
    <text evidence="1">The basic functional RuBisCO is composed of a large chain homodimer in a 'head-to-tail' conformation. In form I RuBisCO this homodimer is arranged in a barrel-like tetramer with the small subunits forming a tetrameric 'cap' on each end of the 'barrel'.</text>
</comment>
<comment type="similarity">
    <text evidence="1">Belongs to the RuBisCO large chain family. Type I subfamily.</text>
</comment>
<sequence length="441" mass="48965">DILAAFRVTPQPGVPPEEAGAAVAAESSTGTWTTVWTDGLTSLDRYKGRCYDIEPVPGEXXXXXXXXXXXXDLFEEGSVTNMFTSXVGNVFGFXXXRALRLEDLRIPPAYTKTFQGPPHGIQVERDKLNKYGRPILGCTIKPKLGLSAKNYGRAVYECLRGGLDFTKDDENVNSQPFMRWRDRFLFCAEAIYKSQAETGEIKGHYLNATAGTCEEMIKRAVFARELGVPIVMHDYLTGGFTANTTLAHYCRDNGLLFHIHRAMHAVIDRQKNHGMHFRVLAKALRMSGGDHVHSGTVVGKLEGERDITLGFVDLLRDDYVEKDRSRGIYFTQDWVSLPGVLPVASGGIHVWHMPALTEIFGDDSVLQFGGGTLGHPWGNRPGAXXNRVALEACVKARNEGRDLAREGNEIIREAAKWSPELAAACEVWKEIKFEFEAMDTI</sequence>
<evidence type="ECO:0000255" key="1">
    <source>
        <dbReference type="HAMAP-Rule" id="MF_01338"/>
    </source>
</evidence>
<reference key="1">
    <citation type="journal article" date="1992" name="Ann. Mo. Bot. Gard.">
        <title>Monophyly of the Asteridae and identification of their major lineages inferred from DNA sequences of rbcL.</title>
        <authorList>
            <person name="Olmstead R.G."/>
            <person name="Michaels H.J."/>
            <person name="Scott K.M."/>
            <person name="Palmer J.D."/>
        </authorList>
        <dbReference type="AGRICOLA" id="IND93014998"/>
    </citation>
    <scope>NUCLEOTIDE SEQUENCE [GENOMIC DNA]</scope>
</reference>
<feature type="chain" id="PRO_0000062613" description="Ribulose bisphosphate carboxylase large chain">
    <location>
        <begin position="1" status="less than"/>
        <end position="441"/>
    </location>
</feature>
<feature type="active site" description="Proton acceptor" evidence="1">
    <location>
        <position position="141"/>
    </location>
</feature>
<feature type="active site" description="Proton acceptor" evidence="1">
    <location>
        <position position="260"/>
    </location>
</feature>
<feature type="binding site" description="in homodimeric partner" evidence="1">
    <location>
        <position position="89"/>
    </location>
    <ligand>
        <name>substrate</name>
    </ligand>
</feature>
<feature type="binding site" evidence="1">
    <location>
        <position position="139"/>
    </location>
    <ligand>
        <name>substrate</name>
    </ligand>
</feature>
<feature type="binding site" evidence="1">
    <location>
        <position position="143"/>
    </location>
    <ligand>
        <name>substrate</name>
    </ligand>
</feature>
<feature type="binding site" description="via carbamate group" evidence="1">
    <location>
        <position position="167"/>
    </location>
    <ligand>
        <name>Mg(2+)</name>
        <dbReference type="ChEBI" id="CHEBI:18420"/>
    </ligand>
</feature>
<feature type="binding site" evidence="1">
    <location>
        <position position="169"/>
    </location>
    <ligand>
        <name>Mg(2+)</name>
        <dbReference type="ChEBI" id="CHEBI:18420"/>
    </ligand>
</feature>
<feature type="binding site" evidence="1">
    <location>
        <position position="170"/>
    </location>
    <ligand>
        <name>Mg(2+)</name>
        <dbReference type="ChEBI" id="CHEBI:18420"/>
    </ligand>
</feature>
<feature type="binding site" evidence="1">
    <location>
        <position position="261"/>
    </location>
    <ligand>
        <name>substrate</name>
    </ligand>
</feature>
<feature type="binding site" evidence="1">
    <location>
        <position position="293"/>
    </location>
    <ligand>
        <name>substrate</name>
    </ligand>
</feature>
<feature type="binding site" evidence="1">
    <location>
        <position position="345"/>
    </location>
    <ligand>
        <name>substrate</name>
    </ligand>
</feature>
<feature type="site" description="Transition state stabilizer" evidence="1">
    <location>
        <position position="300"/>
    </location>
</feature>
<feature type="modified residue" description="N6-carboxylysine" evidence="1">
    <location>
        <position position="167"/>
    </location>
</feature>
<feature type="disulfide bond" description="Interchain; in linked form" evidence="1">
    <location>
        <position position="213"/>
    </location>
</feature>
<feature type="non-terminal residue">
    <location>
        <position position="1"/>
    </location>
</feature>
<proteinExistence type="inferred from homology"/>
<organism>
    <name type="scientific">Viola sororia</name>
    <name type="common">Woolly blue violet</name>
    <dbReference type="NCBI Taxonomy" id="13758"/>
    <lineage>
        <taxon>Eukaryota</taxon>
        <taxon>Viridiplantae</taxon>
        <taxon>Streptophyta</taxon>
        <taxon>Embryophyta</taxon>
        <taxon>Tracheophyta</taxon>
        <taxon>Spermatophyta</taxon>
        <taxon>Magnoliopsida</taxon>
        <taxon>eudicotyledons</taxon>
        <taxon>Gunneridae</taxon>
        <taxon>Pentapetalae</taxon>
        <taxon>rosids</taxon>
        <taxon>fabids</taxon>
        <taxon>Malpighiales</taxon>
        <taxon>Violaceae</taxon>
        <taxon>Viola</taxon>
        <taxon>Viola subgen. Viola</taxon>
        <taxon>Viola sect. Nosphinium</taxon>
        <taxon>Viola subsect. Borealiamericanae</taxon>
    </lineage>
</organism>
<gene>
    <name evidence="1" type="primary">rbcL</name>
</gene>
<accession>Q05995</accession>
<keyword id="KW-0113">Calvin cycle</keyword>
<keyword id="KW-0120">Carbon dioxide fixation</keyword>
<keyword id="KW-0150">Chloroplast</keyword>
<keyword id="KW-1015">Disulfide bond</keyword>
<keyword id="KW-0456">Lyase</keyword>
<keyword id="KW-0460">Magnesium</keyword>
<keyword id="KW-0479">Metal-binding</keyword>
<keyword id="KW-0503">Monooxygenase</keyword>
<keyword id="KW-0560">Oxidoreductase</keyword>
<keyword id="KW-0601">Photorespiration</keyword>
<keyword id="KW-0602">Photosynthesis</keyword>
<keyword id="KW-0934">Plastid</keyword>
<name>RBL_VIOSO</name>
<protein>
    <recommendedName>
        <fullName evidence="1">Ribulose bisphosphate carboxylase large chain</fullName>
        <shortName evidence="1">RuBisCO large subunit</shortName>
        <ecNumber evidence="1">4.1.1.39</ecNumber>
    </recommendedName>
</protein>
<geneLocation type="chloroplast"/>